<organism>
    <name type="scientific">Phocaeicola vulgatus (strain ATCC 8482 / DSM 1447 / JCM 5826 / CCUG 4940 / NBRC 14291 / NCTC 11154)</name>
    <name type="common">Bacteroides vulgatus</name>
    <dbReference type="NCBI Taxonomy" id="435590"/>
    <lineage>
        <taxon>Bacteria</taxon>
        <taxon>Pseudomonadati</taxon>
        <taxon>Bacteroidota</taxon>
        <taxon>Bacteroidia</taxon>
        <taxon>Bacteroidales</taxon>
        <taxon>Bacteroidaceae</taxon>
        <taxon>Phocaeicola</taxon>
    </lineage>
</organism>
<feature type="chain" id="PRO_1000008803" description="Elongation factor G">
    <location>
        <begin position="1"/>
        <end position="705"/>
    </location>
</feature>
<feature type="domain" description="tr-type G">
    <location>
        <begin position="7"/>
        <end position="287"/>
    </location>
</feature>
<feature type="region of interest" description="Disordered" evidence="2">
    <location>
        <begin position="293"/>
        <end position="312"/>
    </location>
</feature>
<feature type="compositionally biased region" description="Basic and acidic residues" evidence="2">
    <location>
        <begin position="302"/>
        <end position="312"/>
    </location>
</feature>
<feature type="binding site" evidence="1">
    <location>
        <begin position="16"/>
        <end position="23"/>
    </location>
    <ligand>
        <name>GTP</name>
        <dbReference type="ChEBI" id="CHEBI:37565"/>
    </ligand>
</feature>
<feature type="binding site" evidence="1">
    <location>
        <begin position="84"/>
        <end position="88"/>
    </location>
    <ligand>
        <name>GTP</name>
        <dbReference type="ChEBI" id="CHEBI:37565"/>
    </ligand>
</feature>
<feature type="binding site" evidence="1">
    <location>
        <begin position="138"/>
        <end position="141"/>
    </location>
    <ligand>
        <name>GTP</name>
        <dbReference type="ChEBI" id="CHEBI:37565"/>
    </ligand>
</feature>
<gene>
    <name evidence="1" type="primary">fusA</name>
    <name type="ordered locus">BVU_0807</name>
</gene>
<keyword id="KW-0963">Cytoplasm</keyword>
<keyword id="KW-0251">Elongation factor</keyword>
<keyword id="KW-0342">GTP-binding</keyword>
<keyword id="KW-0547">Nucleotide-binding</keyword>
<keyword id="KW-0648">Protein biosynthesis</keyword>
<protein>
    <recommendedName>
        <fullName evidence="1">Elongation factor G</fullName>
        <shortName evidence="1">EF-G</shortName>
    </recommendedName>
</protein>
<reference key="1">
    <citation type="journal article" date="2007" name="PLoS Biol.">
        <title>Evolution of symbiotic bacteria in the distal human intestine.</title>
        <authorList>
            <person name="Xu J."/>
            <person name="Mahowald M.A."/>
            <person name="Ley R.E."/>
            <person name="Lozupone C.A."/>
            <person name="Hamady M."/>
            <person name="Martens E.C."/>
            <person name="Henrissat B."/>
            <person name="Coutinho P.M."/>
            <person name="Minx P."/>
            <person name="Latreille P."/>
            <person name="Cordum H."/>
            <person name="Van Brunt A."/>
            <person name="Kim K."/>
            <person name="Fulton R.S."/>
            <person name="Fulton L.A."/>
            <person name="Clifton S.W."/>
            <person name="Wilson R.K."/>
            <person name="Knight R.D."/>
            <person name="Gordon J.I."/>
        </authorList>
    </citation>
    <scope>NUCLEOTIDE SEQUENCE [LARGE SCALE GENOMIC DNA]</scope>
    <source>
        <strain>ATCC 8482 / DSM 1447 / JCM 5826 / CCUG 4940 / NBRC 14291 / NCTC 11154</strain>
    </source>
</reference>
<dbReference type="EMBL" id="CP000139">
    <property type="protein sequence ID" value="ABR38511.1"/>
    <property type="molecule type" value="Genomic_DNA"/>
</dbReference>
<dbReference type="RefSeq" id="WP_005844844.1">
    <property type="nucleotide sequence ID" value="NZ_JANSWM010000035.1"/>
</dbReference>
<dbReference type="SMR" id="A6KYJ7"/>
<dbReference type="STRING" id="435590.BVU_0807"/>
<dbReference type="PaxDb" id="435590-BVU_0807"/>
<dbReference type="GeneID" id="5301774"/>
<dbReference type="KEGG" id="bvu:BVU_0807"/>
<dbReference type="eggNOG" id="COG0480">
    <property type="taxonomic scope" value="Bacteria"/>
</dbReference>
<dbReference type="HOGENOM" id="CLU_002794_4_1_10"/>
<dbReference type="BioCyc" id="BVUL435590:G1G59-849-MONOMER"/>
<dbReference type="Proteomes" id="UP000002861">
    <property type="component" value="Chromosome"/>
</dbReference>
<dbReference type="GO" id="GO:0005737">
    <property type="term" value="C:cytoplasm"/>
    <property type="evidence" value="ECO:0007669"/>
    <property type="project" value="UniProtKB-SubCell"/>
</dbReference>
<dbReference type="GO" id="GO:0005525">
    <property type="term" value="F:GTP binding"/>
    <property type="evidence" value="ECO:0007669"/>
    <property type="project" value="UniProtKB-UniRule"/>
</dbReference>
<dbReference type="GO" id="GO:0003924">
    <property type="term" value="F:GTPase activity"/>
    <property type="evidence" value="ECO:0007669"/>
    <property type="project" value="InterPro"/>
</dbReference>
<dbReference type="GO" id="GO:0003746">
    <property type="term" value="F:translation elongation factor activity"/>
    <property type="evidence" value="ECO:0007669"/>
    <property type="project" value="UniProtKB-UniRule"/>
</dbReference>
<dbReference type="GO" id="GO:0032790">
    <property type="term" value="P:ribosome disassembly"/>
    <property type="evidence" value="ECO:0007669"/>
    <property type="project" value="TreeGrafter"/>
</dbReference>
<dbReference type="CDD" id="cd01886">
    <property type="entry name" value="EF-G"/>
    <property type="match status" value="1"/>
</dbReference>
<dbReference type="CDD" id="cd16262">
    <property type="entry name" value="EFG_III"/>
    <property type="match status" value="1"/>
</dbReference>
<dbReference type="CDD" id="cd01434">
    <property type="entry name" value="EFG_mtEFG1_IV"/>
    <property type="match status" value="1"/>
</dbReference>
<dbReference type="CDD" id="cd03713">
    <property type="entry name" value="EFG_mtEFG_C"/>
    <property type="match status" value="1"/>
</dbReference>
<dbReference type="CDD" id="cd04088">
    <property type="entry name" value="EFG_mtEFG_II"/>
    <property type="match status" value="1"/>
</dbReference>
<dbReference type="FunFam" id="2.40.30.10:FF:000006">
    <property type="entry name" value="Elongation factor G"/>
    <property type="match status" value="1"/>
</dbReference>
<dbReference type="FunFam" id="3.30.230.10:FF:000003">
    <property type="entry name" value="Elongation factor G"/>
    <property type="match status" value="1"/>
</dbReference>
<dbReference type="FunFam" id="3.30.70.240:FF:000001">
    <property type="entry name" value="Elongation factor G"/>
    <property type="match status" value="1"/>
</dbReference>
<dbReference type="FunFam" id="3.30.70.870:FF:000001">
    <property type="entry name" value="Elongation factor G"/>
    <property type="match status" value="1"/>
</dbReference>
<dbReference type="FunFam" id="3.40.50.300:FF:000029">
    <property type="entry name" value="Elongation factor G"/>
    <property type="match status" value="1"/>
</dbReference>
<dbReference type="Gene3D" id="3.30.230.10">
    <property type="match status" value="1"/>
</dbReference>
<dbReference type="Gene3D" id="3.30.70.240">
    <property type="match status" value="1"/>
</dbReference>
<dbReference type="Gene3D" id="3.30.70.870">
    <property type="entry name" value="Elongation Factor G (Translational Gtpase), domain 3"/>
    <property type="match status" value="1"/>
</dbReference>
<dbReference type="Gene3D" id="3.40.50.300">
    <property type="entry name" value="P-loop containing nucleotide triphosphate hydrolases"/>
    <property type="match status" value="1"/>
</dbReference>
<dbReference type="Gene3D" id="2.40.30.10">
    <property type="entry name" value="Translation factors"/>
    <property type="match status" value="1"/>
</dbReference>
<dbReference type="HAMAP" id="MF_00054_B">
    <property type="entry name" value="EF_G_EF_2_B"/>
    <property type="match status" value="1"/>
</dbReference>
<dbReference type="InterPro" id="IPR041095">
    <property type="entry name" value="EFG_II"/>
</dbReference>
<dbReference type="InterPro" id="IPR009022">
    <property type="entry name" value="EFG_III"/>
</dbReference>
<dbReference type="InterPro" id="IPR035647">
    <property type="entry name" value="EFG_III/V"/>
</dbReference>
<dbReference type="InterPro" id="IPR047872">
    <property type="entry name" value="EFG_IV"/>
</dbReference>
<dbReference type="InterPro" id="IPR035649">
    <property type="entry name" value="EFG_V"/>
</dbReference>
<dbReference type="InterPro" id="IPR000640">
    <property type="entry name" value="EFG_V-like"/>
</dbReference>
<dbReference type="InterPro" id="IPR004161">
    <property type="entry name" value="EFTu-like_2"/>
</dbReference>
<dbReference type="InterPro" id="IPR031157">
    <property type="entry name" value="G_TR_CS"/>
</dbReference>
<dbReference type="InterPro" id="IPR027417">
    <property type="entry name" value="P-loop_NTPase"/>
</dbReference>
<dbReference type="InterPro" id="IPR020568">
    <property type="entry name" value="Ribosomal_Su5_D2-typ_SF"/>
</dbReference>
<dbReference type="InterPro" id="IPR014721">
    <property type="entry name" value="Ribsml_uS5_D2-typ_fold_subgr"/>
</dbReference>
<dbReference type="InterPro" id="IPR005225">
    <property type="entry name" value="Small_GTP-bd"/>
</dbReference>
<dbReference type="InterPro" id="IPR000795">
    <property type="entry name" value="T_Tr_GTP-bd_dom"/>
</dbReference>
<dbReference type="InterPro" id="IPR009000">
    <property type="entry name" value="Transl_B-barrel_sf"/>
</dbReference>
<dbReference type="InterPro" id="IPR004540">
    <property type="entry name" value="Transl_elong_EFG/EF2"/>
</dbReference>
<dbReference type="InterPro" id="IPR005517">
    <property type="entry name" value="Transl_elong_EFG/EF2_IV"/>
</dbReference>
<dbReference type="NCBIfam" id="TIGR00484">
    <property type="entry name" value="EF-G"/>
    <property type="match status" value="1"/>
</dbReference>
<dbReference type="NCBIfam" id="NF009381">
    <property type="entry name" value="PRK12740.1-5"/>
    <property type="match status" value="1"/>
</dbReference>
<dbReference type="NCBIfam" id="TIGR00231">
    <property type="entry name" value="small_GTP"/>
    <property type="match status" value="1"/>
</dbReference>
<dbReference type="PANTHER" id="PTHR43261:SF1">
    <property type="entry name" value="RIBOSOME-RELEASING FACTOR 2, MITOCHONDRIAL"/>
    <property type="match status" value="1"/>
</dbReference>
<dbReference type="PANTHER" id="PTHR43261">
    <property type="entry name" value="TRANSLATION ELONGATION FACTOR G-RELATED"/>
    <property type="match status" value="1"/>
</dbReference>
<dbReference type="Pfam" id="PF00679">
    <property type="entry name" value="EFG_C"/>
    <property type="match status" value="1"/>
</dbReference>
<dbReference type="Pfam" id="PF14492">
    <property type="entry name" value="EFG_III"/>
    <property type="match status" value="1"/>
</dbReference>
<dbReference type="Pfam" id="PF03764">
    <property type="entry name" value="EFG_IV"/>
    <property type="match status" value="1"/>
</dbReference>
<dbReference type="Pfam" id="PF00009">
    <property type="entry name" value="GTP_EFTU"/>
    <property type="match status" value="1"/>
</dbReference>
<dbReference type="Pfam" id="PF03144">
    <property type="entry name" value="GTP_EFTU_D2"/>
    <property type="match status" value="1"/>
</dbReference>
<dbReference type="PRINTS" id="PR00315">
    <property type="entry name" value="ELONGATNFCT"/>
</dbReference>
<dbReference type="SMART" id="SM00838">
    <property type="entry name" value="EFG_C"/>
    <property type="match status" value="1"/>
</dbReference>
<dbReference type="SMART" id="SM00889">
    <property type="entry name" value="EFG_IV"/>
    <property type="match status" value="1"/>
</dbReference>
<dbReference type="SUPFAM" id="SSF54980">
    <property type="entry name" value="EF-G C-terminal domain-like"/>
    <property type="match status" value="2"/>
</dbReference>
<dbReference type="SUPFAM" id="SSF52540">
    <property type="entry name" value="P-loop containing nucleoside triphosphate hydrolases"/>
    <property type="match status" value="1"/>
</dbReference>
<dbReference type="SUPFAM" id="SSF54211">
    <property type="entry name" value="Ribosomal protein S5 domain 2-like"/>
    <property type="match status" value="1"/>
</dbReference>
<dbReference type="SUPFAM" id="SSF50447">
    <property type="entry name" value="Translation proteins"/>
    <property type="match status" value="1"/>
</dbReference>
<dbReference type="PROSITE" id="PS00301">
    <property type="entry name" value="G_TR_1"/>
    <property type="match status" value="1"/>
</dbReference>
<dbReference type="PROSITE" id="PS51722">
    <property type="entry name" value="G_TR_2"/>
    <property type="match status" value="1"/>
</dbReference>
<name>EFG_PHOV8</name>
<comment type="function">
    <text evidence="1">Catalyzes the GTP-dependent ribosomal translocation step during translation elongation. During this step, the ribosome changes from the pre-translocational (PRE) to the post-translocational (POST) state as the newly formed A-site-bound peptidyl-tRNA and P-site-bound deacylated tRNA move to the P and E sites, respectively. Catalyzes the coordinated movement of the two tRNA molecules, the mRNA and conformational changes in the ribosome.</text>
</comment>
<comment type="subcellular location">
    <subcellularLocation>
        <location evidence="1">Cytoplasm</location>
    </subcellularLocation>
</comment>
<comment type="similarity">
    <text evidence="1">Belongs to the TRAFAC class translation factor GTPase superfamily. Classic translation factor GTPase family. EF-G/EF-2 subfamily.</text>
</comment>
<proteinExistence type="inferred from homology"/>
<evidence type="ECO:0000255" key="1">
    <source>
        <dbReference type="HAMAP-Rule" id="MF_00054"/>
    </source>
</evidence>
<evidence type="ECO:0000256" key="2">
    <source>
        <dbReference type="SAM" id="MobiDB-lite"/>
    </source>
</evidence>
<accession>A6KYJ7</accession>
<sequence>MAKHDLHLTRNIGIMAHIDAGKTTTSERILFYTGLTHKIGEVHDGAATMDWMEQEQERGITITSAATTTRWKYAGNTYKINLIDTPGHVDFTAEVERSLRVLDGAVAAYCAVGGVEPQSETVWRQADKYNVPRIGYVNKMDRSGADFFEVVRQMKDVLGANACPVVIPIGAEESFKGVVDLIKMKAILWHDETMGADYSVEEIPANLVDEANEWREKMLEKVAEFDDALMEKFFDDPSTITEEEILRALRAGTLKMDIVPMFCGSSFKNKGVQTLLDYVCAFLPSPLDTPAIVGTNPTTGAEEDRKPSEDEKTSALAFKIATDPYVGRLTFFRVYSGKVEAGSYIYNTRSGKKERVSRLFQMHSNKQNPVEVIGAGDIGAGVGFKDIRTGDTLCDEDAPIVLESMEFPDPVIGIAVEPKTQKDLDKLSNGLAKLAEEDPTFTVKTDEQSGQTIISGMGELHLDIIIDRLKREFKVECNQGKPQVNYKEAITKTVELREVYKKQSGGRGKFADIIVAIGPVDEDFTQGGLQFIDEVKGGNVPKEFIPSVQKGFQTAMKNGVLAGYPLDSLKVVLKDGSFHPVDSDQLSFEICAIQAYKNACAKAGPVLTEPIMKLEVVTPEENMGDVIGDLNKRRGQVEGMESSRSGARIVKAKVPLAEMFGYVTALRTITSGRATSSMTYDHHAQVSSSIAKAVLEEVKGRVDLV</sequence>